<name>TYSY_GEOKA</name>
<accession>Q5KZ25</accession>
<organism>
    <name type="scientific">Geobacillus kaustophilus (strain HTA426)</name>
    <dbReference type="NCBI Taxonomy" id="235909"/>
    <lineage>
        <taxon>Bacteria</taxon>
        <taxon>Bacillati</taxon>
        <taxon>Bacillota</taxon>
        <taxon>Bacilli</taxon>
        <taxon>Bacillales</taxon>
        <taxon>Anoxybacillaceae</taxon>
        <taxon>Geobacillus</taxon>
        <taxon>Geobacillus thermoleovorans group</taxon>
    </lineage>
</organism>
<protein>
    <recommendedName>
        <fullName evidence="1">Thymidylate synthase</fullName>
        <shortName evidence="1">TS</shortName>
        <shortName evidence="1">TSase</shortName>
        <ecNumber evidence="1">2.1.1.45</ecNumber>
    </recommendedName>
</protein>
<gene>
    <name evidence="1" type="primary">thyA</name>
    <name type="ordered locus">GK1776</name>
</gene>
<proteinExistence type="inferred from homology"/>
<comment type="function">
    <text evidence="1">Catalyzes the reductive methylation of 2'-deoxyuridine-5'-monophosphate (dUMP) to 2'-deoxythymidine-5'-monophosphate (dTMP) while utilizing 5,10-methylenetetrahydrofolate (mTHF) as the methyl donor and reductant in the reaction, yielding dihydrofolate (DHF) as a by-product. This enzymatic reaction provides an intracellular de novo source of dTMP, an essential precursor for DNA biosynthesis.</text>
</comment>
<comment type="catalytic activity">
    <reaction evidence="1">
        <text>dUMP + (6R)-5,10-methylene-5,6,7,8-tetrahydrofolate = 7,8-dihydrofolate + dTMP</text>
        <dbReference type="Rhea" id="RHEA:12104"/>
        <dbReference type="ChEBI" id="CHEBI:15636"/>
        <dbReference type="ChEBI" id="CHEBI:57451"/>
        <dbReference type="ChEBI" id="CHEBI:63528"/>
        <dbReference type="ChEBI" id="CHEBI:246422"/>
        <dbReference type="EC" id="2.1.1.45"/>
    </reaction>
</comment>
<comment type="pathway">
    <text evidence="1">Pyrimidine metabolism; dTTP biosynthesis.</text>
</comment>
<comment type="subunit">
    <text evidence="1">Homodimer.</text>
</comment>
<comment type="subcellular location">
    <subcellularLocation>
        <location evidence="1">Cytoplasm</location>
    </subcellularLocation>
</comment>
<comment type="similarity">
    <text evidence="1">Belongs to the thymidylate synthase family. Bacterial-type ThyA subfamily.</text>
</comment>
<keyword id="KW-0963">Cytoplasm</keyword>
<keyword id="KW-0489">Methyltransferase</keyword>
<keyword id="KW-0545">Nucleotide biosynthesis</keyword>
<keyword id="KW-1185">Reference proteome</keyword>
<keyword id="KW-0808">Transferase</keyword>
<dbReference type="EC" id="2.1.1.45" evidence="1"/>
<dbReference type="EMBL" id="BA000043">
    <property type="protein sequence ID" value="BAD76061.1"/>
    <property type="molecule type" value="Genomic_DNA"/>
</dbReference>
<dbReference type="RefSeq" id="WP_011231268.1">
    <property type="nucleotide sequence ID" value="NC_006510.1"/>
</dbReference>
<dbReference type="SMR" id="Q5KZ25"/>
<dbReference type="STRING" id="235909.GK1776"/>
<dbReference type="KEGG" id="gka:GK1776"/>
<dbReference type="eggNOG" id="COG0207">
    <property type="taxonomic scope" value="Bacteria"/>
</dbReference>
<dbReference type="HOGENOM" id="CLU_021669_0_0_9"/>
<dbReference type="UniPathway" id="UPA00575"/>
<dbReference type="Proteomes" id="UP000001172">
    <property type="component" value="Chromosome"/>
</dbReference>
<dbReference type="GO" id="GO:0005829">
    <property type="term" value="C:cytosol"/>
    <property type="evidence" value="ECO:0007669"/>
    <property type="project" value="TreeGrafter"/>
</dbReference>
<dbReference type="GO" id="GO:0004799">
    <property type="term" value="F:thymidylate synthase activity"/>
    <property type="evidence" value="ECO:0007669"/>
    <property type="project" value="UniProtKB-UniRule"/>
</dbReference>
<dbReference type="GO" id="GO:0006231">
    <property type="term" value="P:dTMP biosynthetic process"/>
    <property type="evidence" value="ECO:0007669"/>
    <property type="project" value="UniProtKB-UniRule"/>
</dbReference>
<dbReference type="GO" id="GO:0006235">
    <property type="term" value="P:dTTP biosynthetic process"/>
    <property type="evidence" value="ECO:0007669"/>
    <property type="project" value="UniProtKB-UniRule"/>
</dbReference>
<dbReference type="GO" id="GO:0032259">
    <property type="term" value="P:methylation"/>
    <property type="evidence" value="ECO:0007669"/>
    <property type="project" value="UniProtKB-KW"/>
</dbReference>
<dbReference type="CDD" id="cd00351">
    <property type="entry name" value="TS_Pyrimidine_HMase"/>
    <property type="match status" value="1"/>
</dbReference>
<dbReference type="FunFam" id="3.30.572.10:FF:000001">
    <property type="entry name" value="Thymidylate synthase"/>
    <property type="match status" value="1"/>
</dbReference>
<dbReference type="Gene3D" id="3.30.572.10">
    <property type="entry name" value="Thymidylate synthase/dCMP hydroxymethylase domain"/>
    <property type="match status" value="1"/>
</dbReference>
<dbReference type="HAMAP" id="MF_00008">
    <property type="entry name" value="Thymidy_synth_bact"/>
    <property type="match status" value="1"/>
</dbReference>
<dbReference type="InterPro" id="IPR045097">
    <property type="entry name" value="Thymidate_synth/dCMP_Mease"/>
</dbReference>
<dbReference type="InterPro" id="IPR023451">
    <property type="entry name" value="Thymidate_synth/dCMP_Mease_dom"/>
</dbReference>
<dbReference type="InterPro" id="IPR036926">
    <property type="entry name" value="Thymidate_synth/dCMP_Mease_sf"/>
</dbReference>
<dbReference type="InterPro" id="IPR000398">
    <property type="entry name" value="Thymidylate_synthase"/>
</dbReference>
<dbReference type="InterPro" id="IPR020940">
    <property type="entry name" value="Thymidylate_synthase_AS"/>
</dbReference>
<dbReference type="NCBIfam" id="NF002497">
    <property type="entry name" value="PRK01827.1-3"/>
    <property type="match status" value="1"/>
</dbReference>
<dbReference type="NCBIfam" id="NF002499">
    <property type="entry name" value="PRK01827.1-5"/>
    <property type="match status" value="1"/>
</dbReference>
<dbReference type="NCBIfam" id="TIGR03284">
    <property type="entry name" value="thym_sym"/>
    <property type="match status" value="2"/>
</dbReference>
<dbReference type="PANTHER" id="PTHR11548:SF9">
    <property type="entry name" value="THYMIDYLATE SYNTHASE"/>
    <property type="match status" value="1"/>
</dbReference>
<dbReference type="PANTHER" id="PTHR11548">
    <property type="entry name" value="THYMIDYLATE SYNTHASE 1"/>
    <property type="match status" value="1"/>
</dbReference>
<dbReference type="Pfam" id="PF00303">
    <property type="entry name" value="Thymidylat_synt"/>
    <property type="match status" value="1"/>
</dbReference>
<dbReference type="PRINTS" id="PR00108">
    <property type="entry name" value="THYMDSNTHASE"/>
</dbReference>
<dbReference type="SUPFAM" id="SSF55831">
    <property type="entry name" value="Thymidylate synthase/dCMP hydroxymethylase"/>
    <property type="match status" value="1"/>
</dbReference>
<dbReference type="PROSITE" id="PS00091">
    <property type="entry name" value="THYMIDYLATE_SYNTHASE"/>
    <property type="match status" value="1"/>
</dbReference>
<reference key="1">
    <citation type="journal article" date="2004" name="Nucleic Acids Res.">
        <title>Thermoadaptation trait revealed by the genome sequence of thermophilic Geobacillus kaustophilus.</title>
        <authorList>
            <person name="Takami H."/>
            <person name="Takaki Y."/>
            <person name="Chee G.-J."/>
            <person name="Nishi S."/>
            <person name="Shimamura S."/>
            <person name="Suzuki H."/>
            <person name="Matsui S."/>
            <person name="Uchiyama I."/>
        </authorList>
    </citation>
    <scope>NUCLEOTIDE SEQUENCE [LARGE SCALE GENOMIC DNA]</scope>
    <source>
        <strain>HTA426</strain>
    </source>
</reference>
<feature type="chain" id="PRO_0000140961" description="Thymidylate synthase">
    <location>
        <begin position="1"/>
        <end position="264"/>
    </location>
</feature>
<feature type="active site" description="Nucleophile" evidence="1">
    <location>
        <position position="146"/>
    </location>
</feature>
<feature type="binding site" description="in other chain" evidence="1">
    <location>
        <position position="21"/>
    </location>
    <ligand>
        <name>dUMP</name>
        <dbReference type="ChEBI" id="CHEBI:246422"/>
        <note>ligand shared between dimeric partners</note>
    </ligand>
</feature>
<feature type="binding site" evidence="1">
    <location>
        <position position="51"/>
    </location>
    <ligand>
        <name>(6R)-5,10-methylene-5,6,7,8-tetrahydrofolate</name>
        <dbReference type="ChEBI" id="CHEBI:15636"/>
    </ligand>
</feature>
<feature type="binding site" evidence="1">
    <location>
        <begin position="126"/>
        <end position="127"/>
    </location>
    <ligand>
        <name>dUMP</name>
        <dbReference type="ChEBI" id="CHEBI:246422"/>
        <note>ligand shared between dimeric partners</note>
    </ligand>
</feature>
<feature type="binding site" description="in other chain" evidence="1">
    <location>
        <begin position="166"/>
        <end position="169"/>
    </location>
    <ligand>
        <name>dUMP</name>
        <dbReference type="ChEBI" id="CHEBI:246422"/>
        <note>ligand shared between dimeric partners</note>
    </ligand>
</feature>
<feature type="binding site" evidence="1">
    <location>
        <position position="169"/>
    </location>
    <ligand>
        <name>(6R)-5,10-methylene-5,6,7,8-tetrahydrofolate</name>
        <dbReference type="ChEBI" id="CHEBI:15636"/>
    </ligand>
</feature>
<feature type="binding site" description="in other chain" evidence="1">
    <location>
        <position position="177"/>
    </location>
    <ligand>
        <name>dUMP</name>
        <dbReference type="ChEBI" id="CHEBI:246422"/>
        <note>ligand shared between dimeric partners</note>
    </ligand>
</feature>
<feature type="binding site" description="in other chain" evidence="1">
    <location>
        <begin position="207"/>
        <end position="209"/>
    </location>
    <ligand>
        <name>dUMP</name>
        <dbReference type="ChEBI" id="CHEBI:246422"/>
        <note>ligand shared between dimeric partners</note>
    </ligand>
</feature>
<feature type="binding site" evidence="1">
    <location>
        <position position="263"/>
    </location>
    <ligand>
        <name>(6R)-5,10-methylene-5,6,7,8-tetrahydrofolate</name>
        <dbReference type="ChEBI" id="CHEBI:15636"/>
    </ligand>
</feature>
<sequence length="264" mass="30512">MRQYLQLLEDILENGVEKEDRTGVGTLSVFGRQLRFNLQDGFPLVTTKKLHIRSIIYELLWFLKGDTNVRYLQENGVTIWDEWADENGDLGPIYGAQWRSWKGADGKTIDQIAWVVEEIKRNPNSRRLLVSAWNVAELDEMKLPPCHYAFQFYVANGRLSCMWQQRSVDTFLGLPFNIASYALLTHMIAQQCDLDVGELIFTGGDVHLYKNHLEQAKLQLTREPRPLPKLVIKRKPPSIFDYEYDDFEIVGYNPHPTIKAPVAV</sequence>
<evidence type="ECO:0000255" key="1">
    <source>
        <dbReference type="HAMAP-Rule" id="MF_00008"/>
    </source>
</evidence>